<comment type="subcellular location">
    <subcellularLocation>
        <location evidence="2">Cell membrane</location>
        <topology evidence="2">Multi-pass membrane protein</topology>
    </subcellularLocation>
</comment>
<comment type="similarity">
    <text evidence="2">Belongs to the 4-toluene sulfonate uptake permease (TSUP) (TC 2.A.102) family.</text>
</comment>
<sequence length="254" mass="27136">MSVSIILMGLFVGALVGLTGVGGAALLTPLLIVLGINPSIAVGTDLVYNSITKLFGVASHWRQKTINFKLVKYLAIGSIPSASLAIGILHLFPAFHQHQEEIIKHALGYVLTLVAISIIVRLFLDRKLRPNRWQLMPLENKRALTILIGVVFGFIVGLTSIGSGSLFAIAMIYLFNMKASQIVGTDIAHAFLLVTAAGILNASFGSVDYMLAANLLLGSIPGVLIGSHLSPRFSPRPLQFIMASIILVSGLKLI</sequence>
<accession>O34578</accession>
<accession>Q796M8</accession>
<gene>
    <name type="primary">yjnA</name>
    <name type="ordered locus">BSU12400</name>
</gene>
<reference key="1">
    <citation type="journal article" date="1998" name="Microbiology">
        <title>A 35.7 kb DNA fragment from the Bacillus subtilis chromosome containing a putative 12.3 kb operon involved in hexuronate catabolism and a perfectly symmetrical hypothetical catabolite-responsive element.</title>
        <authorList>
            <person name="Rivolta C."/>
            <person name="Soldo B."/>
            <person name="Lazarevic V."/>
            <person name="Joris B."/>
            <person name="Mauel C."/>
            <person name="Karamata D."/>
        </authorList>
    </citation>
    <scope>NUCLEOTIDE SEQUENCE [GENOMIC DNA]</scope>
    <source>
        <strain>168</strain>
    </source>
</reference>
<reference key="2">
    <citation type="journal article" date="1997" name="Nature">
        <title>The complete genome sequence of the Gram-positive bacterium Bacillus subtilis.</title>
        <authorList>
            <person name="Kunst F."/>
            <person name="Ogasawara N."/>
            <person name="Moszer I."/>
            <person name="Albertini A.M."/>
            <person name="Alloni G."/>
            <person name="Azevedo V."/>
            <person name="Bertero M.G."/>
            <person name="Bessieres P."/>
            <person name="Bolotin A."/>
            <person name="Borchert S."/>
            <person name="Borriss R."/>
            <person name="Boursier L."/>
            <person name="Brans A."/>
            <person name="Braun M."/>
            <person name="Brignell S.C."/>
            <person name="Bron S."/>
            <person name="Brouillet S."/>
            <person name="Bruschi C.V."/>
            <person name="Caldwell B."/>
            <person name="Capuano V."/>
            <person name="Carter N.M."/>
            <person name="Choi S.-K."/>
            <person name="Codani J.-J."/>
            <person name="Connerton I.F."/>
            <person name="Cummings N.J."/>
            <person name="Daniel R.A."/>
            <person name="Denizot F."/>
            <person name="Devine K.M."/>
            <person name="Duesterhoeft A."/>
            <person name="Ehrlich S.D."/>
            <person name="Emmerson P.T."/>
            <person name="Entian K.-D."/>
            <person name="Errington J."/>
            <person name="Fabret C."/>
            <person name="Ferrari E."/>
            <person name="Foulger D."/>
            <person name="Fritz C."/>
            <person name="Fujita M."/>
            <person name="Fujita Y."/>
            <person name="Fuma S."/>
            <person name="Galizzi A."/>
            <person name="Galleron N."/>
            <person name="Ghim S.-Y."/>
            <person name="Glaser P."/>
            <person name="Goffeau A."/>
            <person name="Golightly E.J."/>
            <person name="Grandi G."/>
            <person name="Guiseppi G."/>
            <person name="Guy B.J."/>
            <person name="Haga K."/>
            <person name="Haiech J."/>
            <person name="Harwood C.R."/>
            <person name="Henaut A."/>
            <person name="Hilbert H."/>
            <person name="Holsappel S."/>
            <person name="Hosono S."/>
            <person name="Hullo M.-F."/>
            <person name="Itaya M."/>
            <person name="Jones L.-M."/>
            <person name="Joris B."/>
            <person name="Karamata D."/>
            <person name="Kasahara Y."/>
            <person name="Klaerr-Blanchard M."/>
            <person name="Klein C."/>
            <person name="Kobayashi Y."/>
            <person name="Koetter P."/>
            <person name="Koningstein G."/>
            <person name="Krogh S."/>
            <person name="Kumano M."/>
            <person name="Kurita K."/>
            <person name="Lapidus A."/>
            <person name="Lardinois S."/>
            <person name="Lauber J."/>
            <person name="Lazarevic V."/>
            <person name="Lee S.-M."/>
            <person name="Levine A."/>
            <person name="Liu H."/>
            <person name="Masuda S."/>
            <person name="Mauel C."/>
            <person name="Medigue C."/>
            <person name="Medina N."/>
            <person name="Mellado R.P."/>
            <person name="Mizuno M."/>
            <person name="Moestl D."/>
            <person name="Nakai S."/>
            <person name="Noback M."/>
            <person name="Noone D."/>
            <person name="O'Reilly M."/>
            <person name="Ogawa K."/>
            <person name="Ogiwara A."/>
            <person name="Oudega B."/>
            <person name="Park S.-H."/>
            <person name="Parro V."/>
            <person name="Pohl T.M."/>
            <person name="Portetelle D."/>
            <person name="Porwollik S."/>
            <person name="Prescott A.M."/>
            <person name="Presecan E."/>
            <person name="Pujic P."/>
            <person name="Purnelle B."/>
            <person name="Rapoport G."/>
            <person name="Rey M."/>
            <person name="Reynolds S."/>
            <person name="Rieger M."/>
            <person name="Rivolta C."/>
            <person name="Rocha E."/>
            <person name="Roche B."/>
            <person name="Rose M."/>
            <person name="Sadaie Y."/>
            <person name="Sato T."/>
            <person name="Scanlan E."/>
            <person name="Schleich S."/>
            <person name="Schroeter R."/>
            <person name="Scoffone F."/>
            <person name="Sekiguchi J."/>
            <person name="Sekowska A."/>
            <person name="Seror S.J."/>
            <person name="Serror P."/>
            <person name="Shin B.-S."/>
            <person name="Soldo B."/>
            <person name="Sorokin A."/>
            <person name="Tacconi E."/>
            <person name="Takagi T."/>
            <person name="Takahashi H."/>
            <person name="Takemaru K."/>
            <person name="Takeuchi M."/>
            <person name="Tamakoshi A."/>
            <person name="Tanaka T."/>
            <person name="Terpstra P."/>
            <person name="Tognoni A."/>
            <person name="Tosato V."/>
            <person name="Uchiyama S."/>
            <person name="Vandenbol M."/>
            <person name="Vannier F."/>
            <person name="Vassarotti A."/>
            <person name="Viari A."/>
            <person name="Wambutt R."/>
            <person name="Wedler E."/>
            <person name="Wedler H."/>
            <person name="Weitzenegger T."/>
            <person name="Winters P."/>
            <person name="Wipat A."/>
            <person name="Yamamoto H."/>
            <person name="Yamane K."/>
            <person name="Yasumoto K."/>
            <person name="Yata K."/>
            <person name="Yoshida K."/>
            <person name="Yoshikawa H.-F."/>
            <person name="Zumstein E."/>
            <person name="Yoshikawa H."/>
            <person name="Danchin A."/>
        </authorList>
    </citation>
    <scope>NUCLEOTIDE SEQUENCE [LARGE SCALE GENOMIC DNA]</scope>
    <source>
        <strain>168</strain>
    </source>
</reference>
<keyword id="KW-1003">Cell membrane</keyword>
<keyword id="KW-0472">Membrane</keyword>
<keyword id="KW-1185">Reference proteome</keyword>
<keyword id="KW-0812">Transmembrane</keyword>
<keyword id="KW-1133">Transmembrane helix</keyword>
<keyword id="KW-0813">Transport</keyword>
<organism>
    <name type="scientific">Bacillus subtilis (strain 168)</name>
    <dbReference type="NCBI Taxonomy" id="224308"/>
    <lineage>
        <taxon>Bacteria</taxon>
        <taxon>Bacillati</taxon>
        <taxon>Bacillota</taxon>
        <taxon>Bacilli</taxon>
        <taxon>Bacillales</taxon>
        <taxon>Bacillaceae</taxon>
        <taxon>Bacillus</taxon>
    </lineage>
</organism>
<proteinExistence type="inferred from homology"/>
<protein>
    <recommendedName>
        <fullName>Probable membrane transporter protein YjnA</fullName>
    </recommendedName>
</protein>
<name>YJNA_BACSU</name>
<dbReference type="EMBL" id="AF015825">
    <property type="protein sequence ID" value="AAC46336.1"/>
    <property type="molecule type" value="Genomic_DNA"/>
</dbReference>
<dbReference type="EMBL" id="AL009126">
    <property type="protein sequence ID" value="CAB13097.1"/>
    <property type="molecule type" value="Genomic_DNA"/>
</dbReference>
<dbReference type="PIR" id="E69853">
    <property type="entry name" value="E69853"/>
</dbReference>
<dbReference type="RefSeq" id="NP_389122.1">
    <property type="nucleotide sequence ID" value="NC_000964.3"/>
</dbReference>
<dbReference type="RefSeq" id="WP_003245643.1">
    <property type="nucleotide sequence ID" value="NZ_OZ025638.1"/>
</dbReference>
<dbReference type="FunCoup" id="O34578">
    <property type="interactions" value="75"/>
</dbReference>
<dbReference type="STRING" id="224308.BSU12400"/>
<dbReference type="PaxDb" id="224308-BSU12400"/>
<dbReference type="EnsemblBacteria" id="CAB13097">
    <property type="protein sequence ID" value="CAB13097"/>
    <property type="gene ID" value="BSU_12400"/>
</dbReference>
<dbReference type="GeneID" id="939412"/>
<dbReference type="KEGG" id="bsu:BSU12400"/>
<dbReference type="PATRIC" id="fig|224308.179.peg.1341"/>
<dbReference type="eggNOG" id="COG0730">
    <property type="taxonomic scope" value="Bacteria"/>
</dbReference>
<dbReference type="InParanoid" id="O34578"/>
<dbReference type="OrthoDB" id="5189995at2"/>
<dbReference type="PhylomeDB" id="O34578"/>
<dbReference type="BioCyc" id="BSUB:BSU12400-MONOMER"/>
<dbReference type="Proteomes" id="UP000001570">
    <property type="component" value="Chromosome"/>
</dbReference>
<dbReference type="GO" id="GO:0005886">
    <property type="term" value="C:plasma membrane"/>
    <property type="evidence" value="ECO:0007669"/>
    <property type="project" value="UniProtKB-SubCell"/>
</dbReference>
<dbReference type="InterPro" id="IPR002781">
    <property type="entry name" value="TM_pro_TauE-like"/>
</dbReference>
<dbReference type="InterPro" id="IPR051598">
    <property type="entry name" value="TSUP/Inactive_protease-like"/>
</dbReference>
<dbReference type="PANTHER" id="PTHR43701">
    <property type="entry name" value="MEMBRANE TRANSPORTER PROTEIN MJ0441-RELATED"/>
    <property type="match status" value="1"/>
</dbReference>
<dbReference type="PANTHER" id="PTHR43701:SF2">
    <property type="entry name" value="MEMBRANE TRANSPORTER PROTEIN YJNA-RELATED"/>
    <property type="match status" value="1"/>
</dbReference>
<dbReference type="Pfam" id="PF01925">
    <property type="entry name" value="TauE"/>
    <property type="match status" value="1"/>
</dbReference>
<feature type="chain" id="PRO_0000389105" description="Probable membrane transporter protein YjnA">
    <location>
        <begin position="1"/>
        <end position="254"/>
    </location>
</feature>
<feature type="transmembrane region" description="Helical" evidence="1">
    <location>
        <begin position="5"/>
        <end position="25"/>
    </location>
</feature>
<feature type="transmembrane region" description="Helical" evidence="1">
    <location>
        <begin position="75"/>
        <end position="95"/>
    </location>
</feature>
<feature type="transmembrane region" description="Helical" evidence="1">
    <location>
        <begin position="105"/>
        <end position="125"/>
    </location>
</feature>
<feature type="transmembrane region" description="Helical" evidence="1">
    <location>
        <begin position="143"/>
        <end position="163"/>
    </location>
</feature>
<feature type="transmembrane region" description="Helical" evidence="1">
    <location>
        <begin position="187"/>
        <end position="207"/>
    </location>
</feature>
<feature type="transmembrane region" description="Helical" evidence="1">
    <location>
        <begin position="209"/>
        <end position="229"/>
    </location>
</feature>
<evidence type="ECO:0000255" key="1"/>
<evidence type="ECO:0000305" key="2"/>